<evidence type="ECO:0000255" key="1">
    <source>
        <dbReference type="HAMAP-Rule" id="MF_01358"/>
    </source>
</evidence>
<protein>
    <recommendedName>
        <fullName evidence="1">NADH-quinone oxidoreductase subunit D</fullName>
        <ecNumber evidence="1">7.1.1.-</ecNumber>
    </recommendedName>
    <alternativeName>
        <fullName evidence="1">NADH dehydrogenase I subunit D</fullName>
    </alternativeName>
    <alternativeName>
        <fullName evidence="1">NDH-1 subunit D</fullName>
    </alternativeName>
</protein>
<comment type="function">
    <text evidence="1">NDH-1 shuttles electrons from NADH, via FMN and iron-sulfur (Fe-S) centers, to quinones in the respiratory chain. The immediate electron acceptor for the enzyme in this species is believed to be ubiquinone. Couples the redox reaction to proton translocation (for every two electrons transferred, four hydrogen ions are translocated across the cytoplasmic membrane), and thus conserves the redox energy in a proton gradient.</text>
</comment>
<comment type="catalytic activity">
    <reaction evidence="1">
        <text>a quinone + NADH + 5 H(+)(in) = a quinol + NAD(+) + 4 H(+)(out)</text>
        <dbReference type="Rhea" id="RHEA:57888"/>
        <dbReference type="ChEBI" id="CHEBI:15378"/>
        <dbReference type="ChEBI" id="CHEBI:24646"/>
        <dbReference type="ChEBI" id="CHEBI:57540"/>
        <dbReference type="ChEBI" id="CHEBI:57945"/>
        <dbReference type="ChEBI" id="CHEBI:132124"/>
    </reaction>
</comment>
<comment type="subunit">
    <text evidence="1">NDH-1 is composed of 14 different subunits. Subunits NuoB, C, D, E, F, and G constitute the peripheral sector of the complex.</text>
</comment>
<comment type="subcellular location">
    <subcellularLocation>
        <location evidence="1">Cell inner membrane</location>
        <topology evidence="1">Peripheral membrane protein</topology>
        <orientation evidence="1">Cytoplasmic side</orientation>
    </subcellularLocation>
</comment>
<comment type="similarity">
    <text evidence="1">Belongs to the complex I 49 kDa subunit family.</text>
</comment>
<organism>
    <name type="scientific">Coxiella burnetii (strain RSA 493 / Nine Mile phase I)</name>
    <dbReference type="NCBI Taxonomy" id="227377"/>
    <lineage>
        <taxon>Bacteria</taxon>
        <taxon>Pseudomonadati</taxon>
        <taxon>Pseudomonadota</taxon>
        <taxon>Gammaproteobacteria</taxon>
        <taxon>Legionellales</taxon>
        <taxon>Coxiellaceae</taxon>
        <taxon>Coxiella</taxon>
    </lineage>
</organism>
<name>NUOD_COXBU</name>
<proteinExistence type="inferred from homology"/>
<reference key="1">
    <citation type="journal article" date="2003" name="Proc. Natl. Acad. Sci. U.S.A.">
        <title>Complete genome sequence of the Q-fever pathogen, Coxiella burnetii.</title>
        <authorList>
            <person name="Seshadri R."/>
            <person name="Paulsen I.T."/>
            <person name="Eisen J.A."/>
            <person name="Read T.D."/>
            <person name="Nelson K.E."/>
            <person name="Nelson W.C."/>
            <person name="Ward N.L."/>
            <person name="Tettelin H."/>
            <person name="Davidsen T.M."/>
            <person name="Beanan M.J."/>
            <person name="DeBoy R.T."/>
            <person name="Daugherty S.C."/>
            <person name="Brinkac L.M."/>
            <person name="Madupu R."/>
            <person name="Dodson R.J."/>
            <person name="Khouri H.M."/>
            <person name="Lee K.H."/>
            <person name="Carty H.A."/>
            <person name="Scanlan D."/>
            <person name="Heinzen R.A."/>
            <person name="Thompson H.A."/>
            <person name="Samuel J.E."/>
            <person name="Fraser C.M."/>
            <person name="Heidelberg J.F."/>
        </authorList>
    </citation>
    <scope>NUCLEOTIDE SEQUENCE [LARGE SCALE GENOMIC DNA]</scope>
    <source>
        <strain>RSA 493 / Nine Mile phase I</strain>
    </source>
</reference>
<dbReference type="EC" id="7.1.1.-" evidence="1"/>
<dbReference type="EMBL" id="AE016828">
    <property type="protein sequence ID" value="AAO90942.1"/>
    <property type="molecule type" value="Genomic_DNA"/>
</dbReference>
<dbReference type="RefSeq" id="NP_820428.1">
    <property type="nucleotide sequence ID" value="NC_002971.3"/>
</dbReference>
<dbReference type="SMR" id="Q83BQ8"/>
<dbReference type="STRING" id="227377.CBU_1445"/>
<dbReference type="EnsemblBacteria" id="AAO90942">
    <property type="protein sequence ID" value="AAO90942"/>
    <property type="gene ID" value="CBU_1445"/>
</dbReference>
<dbReference type="GeneID" id="1209352"/>
<dbReference type="KEGG" id="cbu:CBU_1445"/>
<dbReference type="PATRIC" id="fig|227377.7.peg.1445"/>
<dbReference type="eggNOG" id="COG0649">
    <property type="taxonomic scope" value="Bacteria"/>
</dbReference>
<dbReference type="HOGENOM" id="CLU_015134_1_1_6"/>
<dbReference type="OrthoDB" id="9801496at2"/>
<dbReference type="Proteomes" id="UP000002671">
    <property type="component" value="Chromosome"/>
</dbReference>
<dbReference type="GO" id="GO:0005886">
    <property type="term" value="C:plasma membrane"/>
    <property type="evidence" value="ECO:0007669"/>
    <property type="project" value="UniProtKB-SubCell"/>
</dbReference>
<dbReference type="GO" id="GO:0051287">
    <property type="term" value="F:NAD binding"/>
    <property type="evidence" value="ECO:0007669"/>
    <property type="project" value="InterPro"/>
</dbReference>
<dbReference type="GO" id="GO:0050136">
    <property type="term" value="F:NADH:ubiquinone reductase (non-electrogenic) activity"/>
    <property type="evidence" value="ECO:0007669"/>
    <property type="project" value="UniProtKB-UniRule"/>
</dbReference>
<dbReference type="GO" id="GO:0048038">
    <property type="term" value="F:quinone binding"/>
    <property type="evidence" value="ECO:0007669"/>
    <property type="project" value="UniProtKB-KW"/>
</dbReference>
<dbReference type="FunFam" id="1.10.645.10:FF:000005">
    <property type="entry name" value="NADH-quinone oxidoreductase subunit D"/>
    <property type="match status" value="1"/>
</dbReference>
<dbReference type="Gene3D" id="1.10.645.10">
    <property type="entry name" value="Cytochrome-c3 Hydrogenase, chain B"/>
    <property type="match status" value="1"/>
</dbReference>
<dbReference type="HAMAP" id="MF_01358">
    <property type="entry name" value="NDH1_NuoD"/>
    <property type="match status" value="1"/>
</dbReference>
<dbReference type="InterPro" id="IPR001135">
    <property type="entry name" value="NADH_Q_OxRdtase_suD"/>
</dbReference>
<dbReference type="InterPro" id="IPR014029">
    <property type="entry name" value="NADH_UbQ_OxRdtase_49kDa_CS"/>
</dbReference>
<dbReference type="InterPro" id="IPR022885">
    <property type="entry name" value="NDH1_su_D/H"/>
</dbReference>
<dbReference type="InterPro" id="IPR029014">
    <property type="entry name" value="NiFe-Hase_large"/>
</dbReference>
<dbReference type="NCBIfam" id="TIGR01962">
    <property type="entry name" value="NuoD"/>
    <property type="match status" value="1"/>
</dbReference>
<dbReference type="NCBIfam" id="NF004739">
    <property type="entry name" value="PRK06075.1"/>
    <property type="match status" value="1"/>
</dbReference>
<dbReference type="PANTHER" id="PTHR11993:SF10">
    <property type="entry name" value="NADH DEHYDROGENASE [UBIQUINONE] IRON-SULFUR PROTEIN 2, MITOCHONDRIAL"/>
    <property type="match status" value="1"/>
</dbReference>
<dbReference type="PANTHER" id="PTHR11993">
    <property type="entry name" value="NADH-UBIQUINONE OXIDOREDUCTASE 49 KDA SUBUNIT"/>
    <property type="match status" value="1"/>
</dbReference>
<dbReference type="Pfam" id="PF00346">
    <property type="entry name" value="Complex1_49kDa"/>
    <property type="match status" value="1"/>
</dbReference>
<dbReference type="SUPFAM" id="SSF56762">
    <property type="entry name" value="HydB/Nqo4-like"/>
    <property type="match status" value="1"/>
</dbReference>
<dbReference type="PROSITE" id="PS00535">
    <property type="entry name" value="COMPLEX1_49K"/>
    <property type="match status" value="1"/>
</dbReference>
<feature type="chain" id="PRO_0000371853" description="NADH-quinone oxidoreductase subunit D">
    <location>
        <begin position="1"/>
        <end position="417"/>
    </location>
</feature>
<keyword id="KW-0997">Cell inner membrane</keyword>
<keyword id="KW-1003">Cell membrane</keyword>
<keyword id="KW-0472">Membrane</keyword>
<keyword id="KW-0520">NAD</keyword>
<keyword id="KW-0874">Quinone</keyword>
<keyword id="KW-1185">Reference proteome</keyword>
<keyword id="KW-1278">Translocase</keyword>
<keyword id="KW-0813">Transport</keyword>
<keyword id="KW-0830">Ubiquinone</keyword>
<accession>Q83BQ8</accession>
<sequence length="417" mass="48119">MAEVRNYTFNFGPQHPAAHGVLRLIVEVDGEVIQRIDPHIGLLHRATEKLAESKPYNQTIGYMDRLDYVSMMANEHGYVLAIEKLLGIEPPIRAKYIRTMFDEITRILNHLLWLGAHALDVGAMTVFLYCFREREDLMDCYEAVSGARMHATYYRPGGVYRDLPDSMPKYKPSRWHNEKAVKKMNEAREGSLLDFIWDFTARFPNLIDEYESLLTDNRIWKQRTVGIGVVSAERALQLGFTGPMLRASGVEWDLRKKQPYAAYDRVDFDIPIGREGDCYDRYLVRIEEMRQSNRIIRQCVEWLRKNPGSVMIDDYKIVPPQREVMKRDMEALIHHFKLFTEGYIVPEGEAYAAVEQPKGEFGVYIVSDGANKPYRVKVRAASYPHLAAMNEMCRGHMIADLVAIISSIDIVFGEIDR</sequence>
<gene>
    <name evidence="1" type="primary">nuoD</name>
    <name type="ordered locus">CBU_1445</name>
</gene>